<organism>
    <name type="scientific">Mus musculus</name>
    <name type="common">Mouse</name>
    <dbReference type="NCBI Taxonomy" id="10090"/>
    <lineage>
        <taxon>Eukaryota</taxon>
        <taxon>Metazoa</taxon>
        <taxon>Chordata</taxon>
        <taxon>Craniata</taxon>
        <taxon>Vertebrata</taxon>
        <taxon>Euteleostomi</taxon>
        <taxon>Mammalia</taxon>
        <taxon>Eutheria</taxon>
        <taxon>Euarchontoglires</taxon>
        <taxon>Glires</taxon>
        <taxon>Rodentia</taxon>
        <taxon>Myomorpha</taxon>
        <taxon>Muroidea</taxon>
        <taxon>Muridae</taxon>
        <taxon>Murinae</taxon>
        <taxon>Mus</taxon>
        <taxon>Mus</taxon>
    </lineage>
</organism>
<feature type="chain" id="PRO_0000221136" description="Tubulin polymerization-promoting protein">
    <location>
        <begin position="1"/>
        <end position="218"/>
    </location>
</feature>
<feature type="region of interest" description="Mediates interaction with LIMK1" evidence="2">
    <location>
        <begin position="1"/>
        <end position="115"/>
    </location>
</feature>
<feature type="region of interest" description="Disordered" evidence="4">
    <location>
        <begin position="1"/>
        <end position="46"/>
    </location>
</feature>
<feature type="region of interest" description="Disordered" evidence="4">
    <location>
        <begin position="166"/>
        <end position="192"/>
    </location>
</feature>
<feature type="compositionally biased region" description="Basic and acidic residues" evidence="4">
    <location>
        <begin position="174"/>
        <end position="183"/>
    </location>
</feature>
<feature type="binding site" evidence="2">
    <location>
        <position position="60"/>
    </location>
    <ligand>
        <name>Zn(2+)</name>
        <dbReference type="ChEBI" id="CHEBI:29105"/>
    </ligand>
</feature>
<feature type="binding site" evidence="2">
    <location>
        <position position="71"/>
    </location>
    <ligand>
        <name>Zn(2+)</name>
        <dbReference type="ChEBI" id="CHEBI:29105"/>
    </ligand>
</feature>
<feature type="binding site" evidence="2">
    <location>
        <position position="79"/>
    </location>
    <ligand>
        <name>Zn(2+)</name>
        <dbReference type="ChEBI" id="CHEBI:29105"/>
    </ligand>
</feature>
<feature type="binding site" evidence="2">
    <location>
        <position position="82"/>
    </location>
    <ligand>
        <name>Zn(2+)</name>
        <dbReference type="ChEBI" id="CHEBI:29105"/>
    </ligand>
</feature>
<feature type="modified residue" description="Phosphothreonine" evidence="11">
    <location>
        <position position="15"/>
    </location>
</feature>
<feature type="modified residue" description="Phosphoserine" evidence="12">
    <location>
        <position position="19"/>
    </location>
</feature>
<feature type="modified residue" description="Phosphoserine" evidence="11 12">
    <location>
        <position position="31"/>
    </location>
</feature>
<feature type="modified residue" description="Phosphoserine" evidence="12">
    <location>
        <position position="34"/>
    </location>
</feature>
<feature type="modified residue" description="Phosphothreonine" evidence="12">
    <location>
        <position position="42"/>
    </location>
</feature>
<feature type="modified residue" description="Phosphothreonine" evidence="2">
    <location>
        <position position="91"/>
    </location>
</feature>
<feature type="modified residue" description="Phosphoserine" evidence="2">
    <location>
        <position position="106"/>
    </location>
</feature>
<feature type="modified residue" description="Phosphoserine" evidence="2">
    <location>
        <position position="158"/>
    </location>
</feature>
<feature type="modified residue" description="Phosphoserine" evidence="2">
    <location>
        <position position="159"/>
    </location>
</feature>
<feature type="glycosylation site" description="O-linked (GlcNAc) serine" evidence="5">
    <location>
        <position position="151"/>
    </location>
</feature>
<proteinExistence type="evidence at protein level"/>
<keyword id="KW-0131">Cell cycle</keyword>
<keyword id="KW-0132">Cell division</keyword>
<keyword id="KW-0963">Cytoplasm</keyword>
<keyword id="KW-0206">Cytoskeleton</keyword>
<keyword id="KW-0903">Direct protein sequencing</keyword>
<keyword id="KW-0325">Glycoprotein</keyword>
<keyword id="KW-0333">Golgi apparatus</keyword>
<keyword id="KW-0378">Hydrolase</keyword>
<keyword id="KW-0460">Magnesium</keyword>
<keyword id="KW-0479">Metal-binding</keyword>
<keyword id="KW-0493">Microtubule</keyword>
<keyword id="KW-0498">Mitosis</keyword>
<keyword id="KW-0539">Nucleus</keyword>
<keyword id="KW-0597">Phosphoprotein</keyword>
<keyword id="KW-1185">Reference proteome</keyword>
<keyword id="KW-0862">Zinc</keyword>
<gene>
    <name evidence="8 10" type="primary">Tppp</name>
</gene>
<protein>
    <recommendedName>
        <fullName evidence="8">Tubulin polymerization-promoting protein</fullName>
        <shortName evidence="8">TPPP</shortName>
        <ecNumber evidence="2">3.6.5.-</ecNumber>
    </recommendedName>
    <alternativeName>
        <fullName evidence="8">25 kDa brain-specific protein</fullName>
    </alternativeName>
    <alternativeName>
        <fullName evidence="8">TPPP/p25</fullName>
    </alternativeName>
    <alternativeName>
        <fullName evidence="8">p25-alpha</fullName>
    </alternativeName>
</protein>
<comment type="function">
    <text evidence="2 6 7">Regulator of microtubule dynamics that plays a key role in myelination by promoting elongation of the myelin sheath (PubMed:31522887). Acts as a microtubule nucleation factor in oligodendrocytes: specifically localizes to the postsynaptic Golgi apparatus region, also named Golgi outpost, and promotes microtubule nucleation, an important step for elongation of the myelin sheath (PubMed:31522887). Required for both uniform polarized growth of distal microtubules as well as directing the branching of proximal processes (PubMed:31522887). Shows magnesium-dependent GTPase activity; the role of the GTPase activity is unclear (By similarity). In addition to microtubule nucleation activity, also involved in microtubule bundling and stabilization of existing microtubules, thereby maintaining the integrity of the microtubule network (PubMed:18028908). Regulates microtubule dynamics by promoting tubulin acetylation: acts by inhibiting the tubulin deacetylase activity of HDAC6 (By similarity). Also regulates cell migration: phosphorylation by ROCK1 inhibits interaction with HDAC6, resulting in decreased acetylation of tubulin and increased cell motility (By similarity). Plays a role in cell proliferation by regulating the G1/S-phase transition (By similarity). Involved in astral microtubule organization and mitotic spindle orientation during early stage of mitosis; this process is regulated by phosphorylation by LIMK2 (By similarity).</text>
</comment>
<comment type="catalytic activity">
    <reaction evidence="2">
        <text>GTP + H2O = GDP + phosphate + H(+)</text>
        <dbReference type="Rhea" id="RHEA:19669"/>
        <dbReference type="ChEBI" id="CHEBI:15377"/>
        <dbReference type="ChEBI" id="CHEBI:15378"/>
        <dbReference type="ChEBI" id="CHEBI:37565"/>
        <dbReference type="ChEBI" id="CHEBI:43474"/>
        <dbReference type="ChEBI" id="CHEBI:58189"/>
    </reaction>
    <physiologicalReaction direction="left-to-right" evidence="2">
        <dbReference type="Rhea" id="RHEA:19670"/>
    </physiologicalReaction>
</comment>
<comment type="cofactor">
    <cofactor evidence="2">
        <name>Mg(2+)</name>
        <dbReference type="ChEBI" id="CHEBI:18420"/>
    </cofactor>
</comment>
<comment type="subunit">
    <text evidence="2 3">Homodimer. Binds tubulin; binding is inhibited by GTP (By similarity). Interacts with MAPK1. Interacts with GAPDH; the interaction is direct (By similarity). Interacts with LIMK1 (via the PDZ domain); the interaction is direct. Interacts with LIMK2. Interacts with HDAC6; thereby inhibiting the tubulin deacetylase activity of HDAC6. Interacts with aggregated SNCA; may have a pro-aggregatory role in synucleinopathies. Interacts with DYNLL1 (By similarity). Interacts (via C-terminus) with S100A2, S100A6 and S100B; these interactions inhibit TPPP dimerization (By similarity).</text>
</comment>
<comment type="subcellular location">
    <subcellularLocation>
        <location evidence="1">Golgi outpost</location>
    </subcellularLocation>
    <subcellularLocation>
        <location evidence="1">Cytoplasm</location>
        <location evidence="1">Cytoskeleton</location>
        <location evidence="1">Microtubule organizing center</location>
    </subcellularLocation>
    <subcellularLocation>
        <location evidence="6">Cytoplasm</location>
        <location evidence="6">Cytoskeleton</location>
    </subcellularLocation>
    <subcellularLocation>
        <location evidence="6">Nucleus</location>
    </subcellularLocation>
    <subcellularLocation>
        <location evidence="2">Cytoplasm</location>
        <location evidence="2">Cytoskeleton</location>
        <location evidence="2">Spindle</location>
    </subcellularLocation>
    <text evidence="1 2 6">Specifically localizes to the postsynaptic Golgi apparatus region, also named Golgi outpost, which shapes dendrite morphology by functioning as sites of acentrosomal microtubule nucleation (By similarity). Mainly localizes to the cytoskeleton (PubMed:18028908). Also found in the nucleus; however, nuclear localization is unclear and requires additional evidences (PubMed:18028908). Localizes to glial Lewy bodies in the brains of individuals with synucleinopathies. During mitosis, colocalizes with LIMK2 at the mitotic spindle (By similarity).</text>
</comment>
<comment type="tissue specificity">
    <text evidence="6">Widely expressed with higher expression in brain (at protein level).</text>
</comment>
<comment type="domain">
    <text evidence="2">Most of the protein is composed of disordered regions. Zinc-binding induces structural rearrangement by promoting molten globule state formation.</text>
</comment>
<comment type="PTM">
    <text evidence="2">Phosphorylated by LIMK1 on serine residues; phosphorylation may alter the tubulin polymerization activity. Phosphorylation by LIMK2, but not LIMK1, regulates astral microtubule organization at early stage of mitosis. Phosphorylation by ROCK1 at Ser-31, Ser-106 and Ser-158 inhibits interaction with HDAC6, resulting in decreased acetylation of tubulin, increased cell motility and entry into S-phase. Phosphorylation by CDK1 inhibits the microtubule polymerizing activity.</text>
</comment>
<comment type="PTM">
    <text evidence="2">Degraded by the proteasome; zinc-binding inhibits degradation by the proteasome.</text>
</comment>
<comment type="disruption phenotype">
    <text evidence="7">Mice display hypomyelination with shorter, thinner myelin sheaths and show breeding and motor coordination deficits (PubMed:31522887). Oligodendrocytes have thinner and more numerous branches in proximal processes (PubMed:31522887). Fewer microtubules are nucleated from Golgi outposts and these are no longer arranged in parallel bundles with their growing plus-ends distal, but show random polarity (PubMed:31522887).</text>
</comment>
<comment type="similarity">
    <text evidence="9">Belongs to the TPPP family.</text>
</comment>
<name>TPPP_MOUSE</name>
<dbReference type="EC" id="3.6.5.-" evidence="2"/>
<dbReference type="EMBL" id="BC054803">
    <property type="protein sequence ID" value="AAH54803.1"/>
    <property type="molecule type" value="mRNA"/>
</dbReference>
<dbReference type="CCDS" id="CCDS26638.1"/>
<dbReference type="RefSeq" id="NP_878259.1">
    <property type="nucleotide sequence ID" value="NM_182839.2"/>
</dbReference>
<dbReference type="RefSeq" id="XP_006517472.1">
    <property type="nucleotide sequence ID" value="XM_006517409.5"/>
</dbReference>
<dbReference type="SMR" id="Q7TQD2"/>
<dbReference type="BioGRID" id="215665">
    <property type="interactions" value="12"/>
</dbReference>
<dbReference type="FunCoup" id="Q7TQD2">
    <property type="interactions" value="342"/>
</dbReference>
<dbReference type="IntAct" id="Q7TQD2">
    <property type="interactions" value="2"/>
</dbReference>
<dbReference type="STRING" id="10090.ENSMUSP00000022057"/>
<dbReference type="GlyCosmos" id="Q7TQD2">
    <property type="glycosylation" value="1 site, No reported glycans"/>
</dbReference>
<dbReference type="GlyGen" id="Q7TQD2">
    <property type="glycosylation" value="3 sites, 1 O-linked glycan (3 sites)"/>
</dbReference>
<dbReference type="iPTMnet" id="Q7TQD2"/>
<dbReference type="PhosphoSitePlus" id="Q7TQD2"/>
<dbReference type="SwissPalm" id="Q7TQD2"/>
<dbReference type="jPOST" id="Q7TQD2"/>
<dbReference type="PaxDb" id="10090-ENSMUSP00000022057"/>
<dbReference type="ProteomicsDB" id="260732"/>
<dbReference type="Antibodypedia" id="22256">
    <property type="antibodies" value="272 antibodies from 35 providers"/>
</dbReference>
<dbReference type="DNASU" id="72948"/>
<dbReference type="Ensembl" id="ENSMUST00000022057.9">
    <property type="protein sequence ID" value="ENSMUSP00000022057.9"/>
    <property type="gene ID" value="ENSMUSG00000021573.16"/>
</dbReference>
<dbReference type="GeneID" id="72948"/>
<dbReference type="KEGG" id="mmu:72948"/>
<dbReference type="UCSC" id="uc007reo.2">
    <property type="organism name" value="mouse"/>
</dbReference>
<dbReference type="AGR" id="MGI:1920198"/>
<dbReference type="CTD" id="11076"/>
<dbReference type="MGI" id="MGI:1920198">
    <property type="gene designation" value="Tppp"/>
</dbReference>
<dbReference type="VEuPathDB" id="HostDB:ENSMUSG00000021573"/>
<dbReference type="eggNOG" id="KOG4070">
    <property type="taxonomic scope" value="Eukaryota"/>
</dbReference>
<dbReference type="GeneTree" id="ENSGT00940000153875"/>
<dbReference type="HOGENOM" id="CLU_091734_0_0_1"/>
<dbReference type="InParanoid" id="Q7TQD2"/>
<dbReference type="OMA" id="CRDCHVI"/>
<dbReference type="OrthoDB" id="548799at2759"/>
<dbReference type="PhylomeDB" id="Q7TQD2"/>
<dbReference type="TreeFam" id="TF314440"/>
<dbReference type="BioGRID-ORCS" id="72948">
    <property type="hits" value="2 hits in 77 CRISPR screens"/>
</dbReference>
<dbReference type="CD-CODE" id="CE726F99">
    <property type="entry name" value="Postsynaptic density"/>
</dbReference>
<dbReference type="ChiTaRS" id="Tppp">
    <property type="organism name" value="mouse"/>
</dbReference>
<dbReference type="PRO" id="PR:Q7TQD2"/>
<dbReference type="Proteomes" id="UP000000589">
    <property type="component" value="Chromosome 13"/>
</dbReference>
<dbReference type="RNAct" id="Q7TQD2">
    <property type="molecule type" value="protein"/>
</dbReference>
<dbReference type="Bgee" id="ENSMUSG00000021573">
    <property type="expression patterns" value="Expressed in primary motor cortex and 177 other cell types or tissues"/>
</dbReference>
<dbReference type="ExpressionAtlas" id="Q7TQD2">
    <property type="expression patterns" value="baseline and differential"/>
</dbReference>
<dbReference type="GO" id="GO:0005737">
    <property type="term" value="C:cytoplasm"/>
    <property type="evidence" value="ECO:0000314"/>
    <property type="project" value="UniProtKB"/>
</dbReference>
<dbReference type="GO" id="GO:0005829">
    <property type="term" value="C:cytosol"/>
    <property type="evidence" value="ECO:0007669"/>
    <property type="project" value="Ensembl"/>
</dbReference>
<dbReference type="GO" id="GO:0005874">
    <property type="term" value="C:microtubule"/>
    <property type="evidence" value="ECO:0007669"/>
    <property type="project" value="UniProtKB-KW"/>
</dbReference>
<dbReference type="GO" id="GO:0097427">
    <property type="term" value="C:microtubule bundle"/>
    <property type="evidence" value="ECO:0007669"/>
    <property type="project" value="Ensembl"/>
</dbReference>
<dbReference type="GO" id="GO:0005815">
    <property type="term" value="C:microtubule organizing center"/>
    <property type="evidence" value="ECO:0007669"/>
    <property type="project" value="UniProtKB-SubCell"/>
</dbReference>
<dbReference type="GO" id="GO:0005739">
    <property type="term" value="C:mitochondrion"/>
    <property type="evidence" value="ECO:0007669"/>
    <property type="project" value="Ensembl"/>
</dbReference>
<dbReference type="GO" id="GO:0072686">
    <property type="term" value="C:mitotic spindle"/>
    <property type="evidence" value="ECO:0000250"/>
    <property type="project" value="UniProtKB"/>
</dbReference>
<dbReference type="GO" id="GO:0043209">
    <property type="term" value="C:myelin sheath"/>
    <property type="evidence" value="ECO:0007005"/>
    <property type="project" value="UniProtKB"/>
</dbReference>
<dbReference type="GO" id="GO:0005634">
    <property type="term" value="C:nucleus"/>
    <property type="evidence" value="ECO:0000314"/>
    <property type="project" value="UniProtKB"/>
</dbReference>
<dbReference type="GO" id="GO:0048471">
    <property type="term" value="C:perinuclear region of cytoplasm"/>
    <property type="evidence" value="ECO:0000250"/>
    <property type="project" value="HGNC-UCL"/>
</dbReference>
<dbReference type="GO" id="GO:0150051">
    <property type="term" value="C:postsynaptic Golgi apparatus"/>
    <property type="evidence" value="ECO:0000250"/>
    <property type="project" value="UniProtKB"/>
</dbReference>
<dbReference type="GO" id="GO:0003924">
    <property type="term" value="F:GTPase activity"/>
    <property type="evidence" value="ECO:0000250"/>
    <property type="project" value="UniProtKB"/>
</dbReference>
<dbReference type="GO" id="GO:0000287">
    <property type="term" value="F:magnesium ion binding"/>
    <property type="evidence" value="ECO:0000250"/>
    <property type="project" value="UniProtKB"/>
</dbReference>
<dbReference type="GO" id="GO:0008017">
    <property type="term" value="F:microtubule binding"/>
    <property type="evidence" value="ECO:0000250"/>
    <property type="project" value="HGNC-UCL"/>
</dbReference>
<dbReference type="GO" id="GO:0042803">
    <property type="term" value="F:protein homodimerization activity"/>
    <property type="evidence" value="ECO:0000250"/>
    <property type="project" value="UniProtKB"/>
</dbReference>
<dbReference type="GO" id="GO:0015631">
    <property type="term" value="F:tubulin binding"/>
    <property type="evidence" value="ECO:0000250"/>
    <property type="project" value="HGNC-UCL"/>
</dbReference>
<dbReference type="GO" id="GO:0030953">
    <property type="term" value="P:astral microtubule organization"/>
    <property type="evidence" value="ECO:0000250"/>
    <property type="project" value="UniProtKB"/>
</dbReference>
<dbReference type="GO" id="GO:0051301">
    <property type="term" value="P:cell division"/>
    <property type="evidence" value="ECO:0007669"/>
    <property type="project" value="UniProtKB-KW"/>
</dbReference>
<dbReference type="GO" id="GO:0001578">
    <property type="term" value="P:microtubule bundle formation"/>
    <property type="evidence" value="ECO:0000250"/>
    <property type="project" value="UniProtKB"/>
</dbReference>
<dbReference type="GO" id="GO:0051418">
    <property type="term" value="P:microtubule nucleation by microtubule organizing center"/>
    <property type="evidence" value="ECO:0000250"/>
    <property type="project" value="UniProtKB"/>
</dbReference>
<dbReference type="GO" id="GO:0046785">
    <property type="term" value="P:microtubule polymerization"/>
    <property type="evidence" value="ECO:0000314"/>
    <property type="project" value="UniProtKB"/>
</dbReference>
<dbReference type="GO" id="GO:0032288">
    <property type="term" value="P:myelin assembly"/>
    <property type="evidence" value="ECO:0000315"/>
    <property type="project" value="UniProtKB"/>
</dbReference>
<dbReference type="GO" id="GO:1904428">
    <property type="term" value="P:negative regulation of tubulin deacetylation"/>
    <property type="evidence" value="ECO:0000250"/>
    <property type="project" value="UniProtKB"/>
</dbReference>
<dbReference type="GO" id="GO:0014003">
    <property type="term" value="P:oligodendrocyte development"/>
    <property type="evidence" value="ECO:0000315"/>
    <property type="project" value="UniProtKB"/>
</dbReference>
<dbReference type="GO" id="GO:0048709">
    <property type="term" value="P:oligodendrocyte differentiation"/>
    <property type="evidence" value="ECO:0000315"/>
    <property type="project" value="UniProtKB"/>
</dbReference>
<dbReference type="GO" id="GO:0031643">
    <property type="term" value="P:positive regulation of myelination"/>
    <property type="evidence" value="ECO:0000315"/>
    <property type="project" value="UniProtKB"/>
</dbReference>
<dbReference type="GO" id="GO:0032273">
    <property type="term" value="P:positive regulation of protein polymerization"/>
    <property type="evidence" value="ECO:0000250"/>
    <property type="project" value="HGNC-UCL"/>
</dbReference>
<dbReference type="GO" id="GO:0031334">
    <property type="term" value="P:positive regulation of protein-containing complex assembly"/>
    <property type="evidence" value="ECO:0000250"/>
    <property type="project" value="HGNC-UCL"/>
</dbReference>
<dbReference type="GO" id="GO:0070507">
    <property type="term" value="P:regulation of microtubule cytoskeleton organization"/>
    <property type="evidence" value="ECO:0000250"/>
    <property type="project" value="UniProtKB"/>
</dbReference>
<dbReference type="FunFam" id="1.10.238.10:FF:000057">
    <property type="entry name" value="Tubulin polymerization-promoting protein family member 3"/>
    <property type="match status" value="1"/>
</dbReference>
<dbReference type="Gene3D" id="1.10.238.10">
    <property type="entry name" value="EF-hand"/>
    <property type="match status" value="1"/>
</dbReference>
<dbReference type="InterPro" id="IPR011992">
    <property type="entry name" value="EF-hand-dom_pair"/>
</dbReference>
<dbReference type="InterPro" id="IPR008907">
    <property type="entry name" value="TPP/p25"/>
</dbReference>
<dbReference type="PANTHER" id="PTHR12932">
    <property type="entry name" value="P25 ALPHA-RELATED"/>
    <property type="match status" value="1"/>
</dbReference>
<dbReference type="PANTHER" id="PTHR12932:SF18">
    <property type="entry name" value="TUBULIN POLYMERIZATION-PROMOTING PROTEIN"/>
    <property type="match status" value="1"/>
</dbReference>
<dbReference type="Pfam" id="PF05517">
    <property type="entry name" value="p25-alpha"/>
    <property type="match status" value="1"/>
</dbReference>
<dbReference type="SUPFAM" id="SSF47473">
    <property type="entry name" value="EF-hand"/>
    <property type="match status" value="1"/>
</dbReference>
<reference key="1">
    <citation type="journal article" date="2004" name="Genome Res.">
        <title>The status, quality, and expansion of the NIH full-length cDNA project: the Mammalian Gene Collection (MGC).</title>
        <authorList>
            <consortium name="The MGC Project Team"/>
        </authorList>
    </citation>
    <scope>NUCLEOTIDE SEQUENCE [LARGE SCALE MRNA]</scope>
    <source>
        <strain>C57BL/6J</strain>
        <tissue>Brain</tissue>
    </source>
</reference>
<reference key="2">
    <citation type="submission" date="2007-04" db="UniProtKB">
        <authorList>
            <person name="Lubec G."/>
            <person name="Kang S.U."/>
        </authorList>
    </citation>
    <scope>PROTEIN SEQUENCE OF 11-25; 30-55; 89-101; 109-124; 156-164 AND 192-205</scope>
    <scope>IDENTIFICATION BY MASS SPECTROMETRY</scope>
    <source>
        <strain>C57BL/6J</strain>
        <tissue>Brain</tissue>
    </source>
</reference>
<reference key="3">
    <citation type="journal article" date="2006" name="Mol. Cell. Proteomics">
        <title>Comprehensive identification of phosphorylation sites in postsynaptic density preparations.</title>
        <authorList>
            <person name="Trinidad J.C."/>
            <person name="Specht C.G."/>
            <person name="Thalhammer A."/>
            <person name="Schoepfer R."/>
            <person name="Burlingame A.L."/>
        </authorList>
    </citation>
    <scope>PHOSPHORYLATION [LARGE SCALE ANALYSIS] AT THR-15 AND SER-31</scope>
    <scope>IDENTIFICATION BY MASS SPECTROMETRY [LARGE SCALE ANALYSIS]</scope>
    <source>
        <tissue>Brain</tissue>
    </source>
</reference>
<reference key="4">
    <citation type="journal article" date="2006" name="Mol. Cell. Proteomics">
        <title>O-linked N-acetylglucosamine proteomics of postsynaptic density preparations using lectin weak affinity chromatography and mass spectrometry.</title>
        <authorList>
            <person name="Vosseller K."/>
            <person name="Trinidad J.C."/>
            <person name="Chalkley R.J."/>
            <person name="Specht C.G."/>
            <person name="Thalhammer A."/>
            <person name="Lynn A.J."/>
            <person name="Snedecor J.O."/>
            <person name="Guan S."/>
            <person name="Medzihradszky K.F."/>
            <person name="Maltby D.A."/>
            <person name="Schoepfer R."/>
            <person name="Burlingame A.L."/>
        </authorList>
    </citation>
    <scope>GLYCOSYLATION [LARGE SCALE ANALYSIS] AT SER-151</scope>
    <source>
        <tissue>Brain</tissue>
    </source>
</reference>
<reference key="5">
    <citation type="journal article" date="2007" name="Exp. Cell Res.">
        <title>The phosphorylation of p25/TPPP by LIM kinase 1 inhibits its ability to assemble microtubules.</title>
        <authorList>
            <person name="Acevedo K."/>
            <person name="Li R."/>
            <person name="Soo P."/>
            <person name="Suryadinata R."/>
            <person name="Sarcevic B."/>
            <person name="Valova V.A."/>
            <person name="Graham M.E."/>
            <person name="Robinson P.J."/>
            <person name="Bernard O."/>
        </authorList>
    </citation>
    <scope>FUNCTION</scope>
    <scope>TISSUE SPECIFICITY</scope>
    <scope>SUBCELLULAR LOCATION</scope>
</reference>
<reference key="6">
    <citation type="journal article" date="2010" name="Cell">
        <title>A tissue-specific atlas of mouse protein phosphorylation and expression.</title>
        <authorList>
            <person name="Huttlin E.L."/>
            <person name="Jedrychowski M.P."/>
            <person name="Elias J.E."/>
            <person name="Goswami T."/>
            <person name="Rad R."/>
            <person name="Beausoleil S.A."/>
            <person name="Villen J."/>
            <person name="Haas W."/>
            <person name="Sowa M.E."/>
            <person name="Gygi S.P."/>
        </authorList>
    </citation>
    <scope>PHOSPHORYLATION [LARGE SCALE ANALYSIS] AT SER-19; SER-31; SER-34 AND THR-42</scope>
    <scope>IDENTIFICATION BY MASS SPECTROMETRY [LARGE SCALE ANALYSIS]</scope>
    <source>
        <tissue>Brain</tissue>
        <tissue>Brown adipose tissue</tissue>
        <tissue>Heart</tissue>
        <tissue>Kidney</tissue>
        <tissue>Liver</tissue>
        <tissue>Lung</tissue>
        <tissue>Spleen</tissue>
        <tissue>Testis</tissue>
    </source>
</reference>
<reference key="7">
    <citation type="journal article" date="2019" name="Cell">
        <title>The Golgi outpost protein TPPP nucleates microtubules and is critical for myelination.</title>
        <authorList>
            <person name="Fu M.M."/>
            <person name="McAlear T.S."/>
            <person name="Nguyen H."/>
            <person name="Oses-Prieto J.A."/>
            <person name="Valenzuela A."/>
            <person name="Shi R.D."/>
            <person name="Perrino J.J."/>
            <person name="Huang T.T."/>
            <person name="Burlingame A.L."/>
            <person name="Bechstedt S."/>
            <person name="Barres B.A."/>
        </authorList>
    </citation>
    <scope>FUNCTION</scope>
    <scope>DISRUPTION PHENOTYPE</scope>
</reference>
<accession>Q7TQD2</accession>
<evidence type="ECO:0000250" key="1">
    <source>
        <dbReference type="UniProtKB" id="D3ZQL7"/>
    </source>
</evidence>
<evidence type="ECO:0000250" key="2">
    <source>
        <dbReference type="UniProtKB" id="O94811"/>
    </source>
</evidence>
<evidence type="ECO:0000250" key="3">
    <source>
        <dbReference type="UniProtKB" id="Q27957"/>
    </source>
</evidence>
<evidence type="ECO:0000256" key="4">
    <source>
        <dbReference type="SAM" id="MobiDB-lite"/>
    </source>
</evidence>
<evidence type="ECO:0000269" key="5">
    <source>
    </source>
</evidence>
<evidence type="ECO:0000269" key="6">
    <source>
    </source>
</evidence>
<evidence type="ECO:0000269" key="7">
    <source>
    </source>
</evidence>
<evidence type="ECO:0000303" key="8">
    <source>
    </source>
</evidence>
<evidence type="ECO:0000305" key="9"/>
<evidence type="ECO:0000312" key="10">
    <source>
        <dbReference type="MGI" id="MGI:1920198"/>
    </source>
</evidence>
<evidence type="ECO:0007744" key="11">
    <source>
    </source>
</evidence>
<evidence type="ECO:0007744" key="12">
    <source>
    </source>
</evidence>
<sequence length="218" mass="23575">MADSKAKPAKAANKTPPKSPGDPARAAKRLSLESEGANEGATAAPELSALEEAFRRFAVHGDTRATGKEMHGKNWSKLCKDCHVIDGKNVTVTDVDIVFSKIKGKSCRTITFEQFQEALEELAKKRFKDKSSEEAVREVHRLIEGRAPVISGVTKAVSSPTVSRLTDTSKFTGSHKERFDQSGKGKGKAGRVDLVDESGYVPGYKHAGTYDQKVQGGK</sequence>